<feature type="chain" id="PRO_0000255695" description="Small ribosomal subunit protein uS17">
    <location>
        <begin position="1"/>
        <end position="82"/>
    </location>
</feature>
<reference key="1">
    <citation type="submission" date="2006-03" db="EMBL/GenBank/DDBJ databases">
        <title>Complete sequence of Rhodopseudomonas palustris BisB18.</title>
        <authorList>
            <consortium name="US DOE Joint Genome Institute"/>
            <person name="Copeland A."/>
            <person name="Lucas S."/>
            <person name="Lapidus A."/>
            <person name="Barry K."/>
            <person name="Detter J.C."/>
            <person name="Glavina del Rio T."/>
            <person name="Hammon N."/>
            <person name="Israni S."/>
            <person name="Dalin E."/>
            <person name="Tice H."/>
            <person name="Pitluck S."/>
            <person name="Chain P."/>
            <person name="Malfatti S."/>
            <person name="Shin M."/>
            <person name="Vergez L."/>
            <person name="Schmutz J."/>
            <person name="Larimer F."/>
            <person name="Land M."/>
            <person name="Hauser L."/>
            <person name="Pelletier D.A."/>
            <person name="Kyrpides N."/>
            <person name="Anderson I."/>
            <person name="Oda Y."/>
            <person name="Harwood C.S."/>
            <person name="Richardson P."/>
        </authorList>
    </citation>
    <scope>NUCLEOTIDE SEQUENCE [LARGE SCALE GENOMIC DNA]</scope>
    <source>
        <strain>BisB18</strain>
    </source>
</reference>
<accession>Q211F7</accession>
<evidence type="ECO:0000255" key="1">
    <source>
        <dbReference type="HAMAP-Rule" id="MF_01345"/>
    </source>
</evidence>
<evidence type="ECO:0000305" key="2"/>
<dbReference type="EMBL" id="CP000301">
    <property type="protein sequence ID" value="ABD88979.1"/>
    <property type="molecule type" value="Genomic_DNA"/>
</dbReference>
<dbReference type="SMR" id="Q211F7"/>
<dbReference type="STRING" id="316056.RPC_3439"/>
<dbReference type="KEGG" id="rpc:RPC_3439"/>
<dbReference type="eggNOG" id="COG0186">
    <property type="taxonomic scope" value="Bacteria"/>
</dbReference>
<dbReference type="HOGENOM" id="CLU_073626_1_1_5"/>
<dbReference type="OrthoDB" id="9811714at2"/>
<dbReference type="GO" id="GO:0022627">
    <property type="term" value="C:cytosolic small ribosomal subunit"/>
    <property type="evidence" value="ECO:0007669"/>
    <property type="project" value="TreeGrafter"/>
</dbReference>
<dbReference type="GO" id="GO:0019843">
    <property type="term" value="F:rRNA binding"/>
    <property type="evidence" value="ECO:0007669"/>
    <property type="project" value="UniProtKB-UniRule"/>
</dbReference>
<dbReference type="GO" id="GO:0003735">
    <property type="term" value="F:structural constituent of ribosome"/>
    <property type="evidence" value="ECO:0007669"/>
    <property type="project" value="InterPro"/>
</dbReference>
<dbReference type="GO" id="GO:0006412">
    <property type="term" value="P:translation"/>
    <property type="evidence" value="ECO:0007669"/>
    <property type="project" value="UniProtKB-UniRule"/>
</dbReference>
<dbReference type="CDD" id="cd00364">
    <property type="entry name" value="Ribosomal_uS17"/>
    <property type="match status" value="1"/>
</dbReference>
<dbReference type="FunFam" id="2.40.50.140:FF:000204">
    <property type="entry name" value="30S ribosomal protein S17"/>
    <property type="match status" value="1"/>
</dbReference>
<dbReference type="Gene3D" id="2.40.50.140">
    <property type="entry name" value="Nucleic acid-binding proteins"/>
    <property type="match status" value="1"/>
</dbReference>
<dbReference type="HAMAP" id="MF_01345_B">
    <property type="entry name" value="Ribosomal_uS17_B"/>
    <property type="match status" value="1"/>
</dbReference>
<dbReference type="InterPro" id="IPR012340">
    <property type="entry name" value="NA-bd_OB-fold"/>
</dbReference>
<dbReference type="InterPro" id="IPR000266">
    <property type="entry name" value="Ribosomal_uS17"/>
</dbReference>
<dbReference type="InterPro" id="IPR019984">
    <property type="entry name" value="Ribosomal_uS17_bact/chlr"/>
</dbReference>
<dbReference type="InterPro" id="IPR019979">
    <property type="entry name" value="Ribosomal_uS17_CS"/>
</dbReference>
<dbReference type="NCBIfam" id="NF004123">
    <property type="entry name" value="PRK05610.1"/>
    <property type="match status" value="1"/>
</dbReference>
<dbReference type="NCBIfam" id="TIGR03635">
    <property type="entry name" value="uS17_bact"/>
    <property type="match status" value="1"/>
</dbReference>
<dbReference type="PANTHER" id="PTHR10744">
    <property type="entry name" value="40S RIBOSOMAL PROTEIN S11 FAMILY MEMBER"/>
    <property type="match status" value="1"/>
</dbReference>
<dbReference type="PANTHER" id="PTHR10744:SF1">
    <property type="entry name" value="SMALL RIBOSOMAL SUBUNIT PROTEIN US17M"/>
    <property type="match status" value="1"/>
</dbReference>
<dbReference type="Pfam" id="PF00366">
    <property type="entry name" value="Ribosomal_S17"/>
    <property type="match status" value="1"/>
</dbReference>
<dbReference type="PRINTS" id="PR00973">
    <property type="entry name" value="RIBOSOMALS17"/>
</dbReference>
<dbReference type="SUPFAM" id="SSF50249">
    <property type="entry name" value="Nucleic acid-binding proteins"/>
    <property type="match status" value="1"/>
</dbReference>
<dbReference type="PROSITE" id="PS00056">
    <property type="entry name" value="RIBOSOMAL_S17"/>
    <property type="match status" value="1"/>
</dbReference>
<organism>
    <name type="scientific">Rhodopseudomonas palustris (strain BisB18)</name>
    <dbReference type="NCBI Taxonomy" id="316056"/>
    <lineage>
        <taxon>Bacteria</taxon>
        <taxon>Pseudomonadati</taxon>
        <taxon>Pseudomonadota</taxon>
        <taxon>Alphaproteobacteria</taxon>
        <taxon>Hyphomicrobiales</taxon>
        <taxon>Nitrobacteraceae</taxon>
        <taxon>Rhodopseudomonas</taxon>
    </lineage>
</organism>
<keyword id="KW-0687">Ribonucleoprotein</keyword>
<keyword id="KW-0689">Ribosomal protein</keyword>
<keyword id="KW-0694">RNA-binding</keyword>
<keyword id="KW-0699">rRNA-binding</keyword>
<name>RS17_RHOPB</name>
<comment type="function">
    <text evidence="1">One of the primary rRNA binding proteins, it binds specifically to the 5'-end of 16S ribosomal RNA.</text>
</comment>
<comment type="subunit">
    <text evidence="1">Part of the 30S ribosomal subunit.</text>
</comment>
<comment type="similarity">
    <text evidence="1">Belongs to the universal ribosomal protein uS17 family.</text>
</comment>
<gene>
    <name evidence="1" type="primary">rpsQ</name>
    <name type="ordered locus">RPC_3439</name>
</gene>
<proteinExistence type="inferred from homology"/>
<sequence>MPKRTLQGVVVSDKQAKTVVVRVDRRFTHPIYKKTIRRSKNYHAHDENNEFKPGDVVWIEESKPISKLKRWTVVRGEQKKTA</sequence>
<protein>
    <recommendedName>
        <fullName evidence="1">Small ribosomal subunit protein uS17</fullName>
    </recommendedName>
    <alternativeName>
        <fullName evidence="2">30S ribosomal protein S17</fullName>
    </alternativeName>
</protein>